<name>PYRE_MARMM</name>
<keyword id="KW-0328">Glycosyltransferase</keyword>
<keyword id="KW-0460">Magnesium</keyword>
<keyword id="KW-0665">Pyrimidine biosynthesis</keyword>
<keyword id="KW-1185">Reference proteome</keyword>
<keyword id="KW-0808">Transferase</keyword>
<sequence length="194" mass="20712">MTRDEVLAEFRAAGALLEGHFILSSGLRSGVFLQKARVFSEPERTERLCKALAAKVRAELGDAPTVIVSPATGGIVPGYEMARQMGLKGLYVERENGEFTLRRGFELTKDDKVLVVEDIVSTGLSSRECIEAINKTGATVIAEACLVDRSGGEADVGVPLIALTEYKVPAYPADQLPPELEAIPAIKPGSRGLA</sequence>
<organism>
    <name type="scientific">Maricaulis maris (strain MCS10)</name>
    <name type="common">Caulobacter maris</name>
    <dbReference type="NCBI Taxonomy" id="394221"/>
    <lineage>
        <taxon>Bacteria</taxon>
        <taxon>Pseudomonadati</taxon>
        <taxon>Pseudomonadota</taxon>
        <taxon>Alphaproteobacteria</taxon>
        <taxon>Maricaulales</taxon>
        <taxon>Maricaulaceae</taxon>
        <taxon>Maricaulis</taxon>
    </lineage>
</organism>
<dbReference type="EC" id="2.4.2.10" evidence="1"/>
<dbReference type="EMBL" id="CP000449">
    <property type="protein sequence ID" value="ABI65866.1"/>
    <property type="molecule type" value="Genomic_DNA"/>
</dbReference>
<dbReference type="RefSeq" id="WP_011643513.1">
    <property type="nucleotide sequence ID" value="NC_008347.1"/>
</dbReference>
<dbReference type="SMR" id="Q0APC1"/>
<dbReference type="STRING" id="394221.Mmar10_1574"/>
<dbReference type="KEGG" id="mmr:Mmar10_1574"/>
<dbReference type="eggNOG" id="COG0461">
    <property type="taxonomic scope" value="Bacteria"/>
</dbReference>
<dbReference type="HOGENOM" id="CLU_074878_3_0_5"/>
<dbReference type="OrthoDB" id="9802134at2"/>
<dbReference type="UniPathway" id="UPA00070">
    <property type="reaction ID" value="UER00119"/>
</dbReference>
<dbReference type="Proteomes" id="UP000001964">
    <property type="component" value="Chromosome"/>
</dbReference>
<dbReference type="GO" id="GO:0000287">
    <property type="term" value="F:magnesium ion binding"/>
    <property type="evidence" value="ECO:0007669"/>
    <property type="project" value="UniProtKB-UniRule"/>
</dbReference>
<dbReference type="GO" id="GO:0004588">
    <property type="term" value="F:orotate phosphoribosyltransferase activity"/>
    <property type="evidence" value="ECO:0007669"/>
    <property type="project" value="UniProtKB-UniRule"/>
</dbReference>
<dbReference type="GO" id="GO:0044205">
    <property type="term" value="P:'de novo' UMP biosynthetic process"/>
    <property type="evidence" value="ECO:0007669"/>
    <property type="project" value="UniProtKB-UniRule"/>
</dbReference>
<dbReference type="GO" id="GO:0019856">
    <property type="term" value="P:pyrimidine nucleobase biosynthetic process"/>
    <property type="evidence" value="ECO:0007669"/>
    <property type="project" value="InterPro"/>
</dbReference>
<dbReference type="CDD" id="cd06223">
    <property type="entry name" value="PRTases_typeI"/>
    <property type="match status" value="1"/>
</dbReference>
<dbReference type="Gene3D" id="3.40.50.2020">
    <property type="match status" value="1"/>
</dbReference>
<dbReference type="HAMAP" id="MF_01208">
    <property type="entry name" value="PyrE"/>
    <property type="match status" value="1"/>
</dbReference>
<dbReference type="InterPro" id="IPR023031">
    <property type="entry name" value="OPRT"/>
</dbReference>
<dbReference type="InterPro" id="IPR006273">
    <property type="entry name" value="Orotate_PRibTrfase_bac"/>
</dbReference>
<dbReference type="InterPro" id="IPR000836">
    <property type="entry name" value="PRibTrfase_dom"/>
</dbReference>
<dbReference type="InterPro" id="IPR029057">
    <property type="entry name" value="PRTase-like"/>
</dbReference>
<dbReference type="NCBIfam" id="TIGR01367">
    <property type="entry name" value="pyrE_Therm"/>
    <property type="match status" value="1"/>
</dbReference>
<dbReference type="PANTHER" id="PTHR19278">
    <property type="entry name" value="OROTATE PHOSPHORIBOSYLTRANSFERASE"/>
    <property type="match status" value="1"/>
</dbReference>
<dbReference type="PANTHER" id="PTHR19278:SF9">
    <property type="entry name" value="URIDINE 5'-MONOPHOSPHATE SYNTHASE"/>
    <property type="match status" value="1"/>
</dbReference>
<dbReference type="Pfam" id="PF00156">
    <property type="entry name" value="Pribosyltran"/>
    <property type="match status" value="1"/>
</dbReference>
<dbReference type="SUPFAM" id="SSF53271">
    <property type="entry name" value="PRTase-like"/>
    <property type="match status" value="1"/>
</dbReference>
<dbReference type="PROSITE" id="PS00103">
    <property type="entry name" value="PUR_PYR_PR_TRANSFER"/>
    <property type="match status" value="1"/>
</dbReference>
<proteinExistence type="inferred from homology"/>
<reference key="1">
    <citation type="submission" date="2006-08" db="EMBL/GenBank/DDBJ databases">
        <title>Complete sequence of Maricaulis maris MCS10.</title>
        <authorList>
            <consortium name="US DOE Joint Genome Institute"/>
            <person name="Copeland A."/>
            <person name="Lucas S."/>
            <person name="Lapidus A."/>
            <person name="Barry K."/>
            <person name="Detter J.C."/>
            <person name="Glavina del Rio T."/>
            <person name="Hammon N."/>
            <person name="Israni S."/>
            <person name="Dalin E."/>
            <person name="Tice H."/>
            <person name="Pitluck S."/>
            <person name="Saunders E."/>
            <person name="Brettin T."/>
            <person name="Bruce D."/>
            <person name="Han C."/>
            <person name="Tapia R."/>
            <person name="Gilna P."/>
            <person name="Schmutz J."/>
            <person name="Larimer F."/>
            <person name="Land M."/>
            <person name="Hauser L."/>
            <person name="Kyrpides N."/>
            <person name="Mikhailova N."/>
            <person name="Viollier P."/>
            <person name="Stephens C."/>
            <person name="Richardson P."/>
        </authorList>
    </citation>
    <scope>NUCLEOTIDE SEQUENCE [LARGE SCALE GENOMIC DNA]</scope>
    <source>
        <strain>MCS10</strain>
    </source>
</reference>
<feature type="chain" id="PRO_1000066254" description="Orotate phosphoribosyltransferase">
    <location>
        <begin position="1"/>
        <end position="194"/>
    </location>
</feature>
<feature type="binding site" evidence="1">
    <location>
        <begin position="117"/>
        <end position="125"/>
    </location>
    <ligand>
        <name>5-phospho-alpha-D-ribose 1-diphosphate</name>
        <dbReference type="ChEBI" id="CHEBI:58017"/>
    </ligand>
</feature>
<feature type="binding site" evidence="1">
    <location>
        <position position="121"/>
    </location>
    <ligand>
        <name>orotate</name>
        <dbReference type="ChEBI" id="CHEBI:30839"/>
    </ligand>
</feature>
<feature type="binding site" evidence="1">
    <location>
        <position position="149"/>
    </location>
    <ligand>
        <name>orotate</name>
        <dbReference type="ChEBI" id="CHEBI:30839"/>
    </ligand>
</feature>
<gene>
    <name evidence="1" type="primary">pyrE</name>
    <name type="ordered locus">Mmar10_1574</name>
</gene>
<evidence type="ECO:0000255" key="1">
    <source>
        <dbReference type="HAMAP-Rule" id="MF_01208"/>
    </source>
</evidence>
<accession>Q0APC1</accession>
<comment type="function">
    <text evidence="1">Catalyzes the transfer of a ribosyl phosphate group from 5-phosphoribose 1-diphosphate to orotate, leading to the formation of orotidine monophosphate (OMP).</text>
</comment>
<comment type="catalytic activity">
    <reaction evidence="1">
        <text>orotidine 5'-phosphate + diphosphate = orotate + 5-phospho-alpha-D-ribose 1-diphosphate</text>
        <dbReference type="Rhea" id="RHEA:10380"/>
        <dbReference type="ChEBI" id="CHEBI:30839"/>
        <dbReference type="ChEBI" id="CHEBI:33019"/>
        <dbReference type="ChEBI" id="CHEBI:57538"/>
        <dbReference type="ChEBI" id="CHEBI:58017"/>
        <dbReference type="EC" id="2.4.2.10"/>
    </reaction>
</comment>
<comment type="cofactor">
    <cofactor evidence="1">
        <name>Mg(2+)</name>
        <dbReference type="ChEBI" id="CHEBI:18420"/>
    </cofactor>
</comment>
<comment type="pathway">
    <text evidence="1">Pyrimidine metabolism; UMP biosynthesis via de novo pathway; UMP from orotate: step 1/2.</text>
</comment>
<comment type="subunit">
    <text evidence="1">Homodimer.</text>
</comment>
<comment type="similarity">
    <text evidence="1">Belongs to the purine/pyrimidine phosphoribosyltransferase family. PyrE subfamily.</text>
</comment>
<protein>
    <recommendedName>
        <fullName evidence="1">Orotate phosphoribosyltransferase</fullName>
        <shortName evidence="1">OPRT</shortName>
        <shortName evidence="1">OPRTase</shortName>
        <ecNumber evidence="1">2.4.2.10</ecNumber>
    </recommendedName>
</protein>